<keyword id="KW-0328">Glycosyltransferase</keyword>
<keyword id="KW-1185">Reference proteome</keyword>
<keyword id="KW-0694">RNA-binding</keyword>
<keyword id="KW-0804">Transcription</keyword>
<keyword id="KW-0805">Transcription regulation</keyword>
<keyword id="KW-0806">Transcription termination</keyword>
<keyword id="KW-0808">Transferase</keyword>
<gene>
    <name evidence="1" type="primary">pyrR</name>
    <name type="ordered locus">NT01CX_1953</name>
</gene>
<accession>A0Q074</accession>
<name>PYRR_CLONN</name>
<sequence length="178" mass="20063">MEFKSILLDEKAIKRTLTRIAHEIIEKNKGVEDIVLLGIQRRGVPIARRIAALIEQFEDVKVEVGSVDITLYRDDLTEVAEQPLLNEKSLDIDVKNKKIILVDDVLFTGRTARAAMEAVIKHGRPDNIQLAVLVDRGHRELPIRADYVGKNVPTSKKELVSVMVSEIDSEDAVKIFEK</sequence>
<protein>
    <recommendedName>
        <fullName evidence="1">Bifunctional protein PyrR</fullName>
    </recommendedName>
    <domain>
        <recommendedName>
            <fullName evidence="1">Pyrimidine operon regulatory protein</fullName>
        </recommendedName>
    </domain>
    <domain>
        <recommendedName>
            <fullName evidence="1">Uracil phosphoribosyltransferase</fullName>
            <shortName evidence="1">UPRTase</shortName>
            <ecNumber evidence="1">2.4.2.9</ecNumber>
        </recommendedName>
    </domain>
</protein>
<comment type="function">
    <text evidence="1">Regulates transcriptional attenuation of the pyrimidine nucleotide (pyr) operon by binding in a uridine-dependent manner to specific sites on pyr mRNA. This disrupts an antiterminator hairpin in the RNA and favors formation of a downstream transcription terminator, leading to a reduced expression of downstream genes.</text>
</comment>
<comment type="function">
    <text evidence="1">Also displays a weak uracil phosphoribosyltransferase activity which is not physiologically significant.</text>
</comment>
<comment type="catalytic activity">
    <reaction evidence="1">
        <text>UMP + diphosphate = 5-phospho-alpha-D-ribose 1-diphosphate + uracil</text>
        <dbReference type="Rhea" id="RHEA:13017"/>
        <dbReference type="ChEBI" id="CHEBI:17568"/>
        <dbReference type="ChEBI" id="CHEBI:33019"/>
        <dbReference type="ChEBI" id="CHEBI:57865"/>
        <dbReference type="ChEBI" id="CHEBI:58017"/>
        <dbReference type="EC" id="2.4.2.9"/>
    </reaction>
</comment>
<comment type="subunit">
    <text evidence="1">Homodimer and homohexamer; in equilibrium.</text>
</comment>
<comment type="similarity">
    <text evidence="1">Belongs to the purine/pyrimidine phosphoribosyltransferase family. PyrR subfamily.</text>
</comment>
<evidence type="ECO:0000255" key="1">
    <source>
        <dbReference type="HAMAP-Rule" id="MF_01219"/>
    </source>
</evidence>
<dbReference type="EC" id="2.4.2.9" evidence="1"/>
<dbReference type="EMBL" id="CP000382">
    <property type="protein sequence ID" value="ABK61036.1"/>
    <property type="molecule type" value="Genomic_DNA"/>
</dbReference>
<dbReference type="RefSeq" id="WP_011722030.1">
    <property type="nucleotide sequence ID" value="NC_008593.1"/>
</dbReference>
<dbReference type="SMR" id="A0Q074"/>
<dbReference type="STRING" id="386415.NT01CX_1953"/>
<dbReference type="KEGG" id="cno:NT01CX_1953"/>
<dbReference type="eggNOG" id="COG2065">
    <property type="taxonomic scope" value="Bacteria"/>
</dbReference>
<dbReference type="HOGENOM" id="CLU_094234_2_1_9"/>
<dbReference type="Proteomes" id="UP000008220">
    <property type="component" value="Chromosome"/>
</dbReference>
<dbReference type="GO" id="GO:0003723">
    <property type="term" value="F:RNA binding"/>
    <property type="evidence" value="ECO:0007669"/>
    <property type="project" value="UniProtKB-UniRule"/>
</dbReference>
<dbReference type="GO" id="GO:0004845">
    <property type="term" value="F:uracil phosphoribosyltransferase activity"/>
    <property type="evidence" value="ECO:0007669"/>
    <property type="project" value="UniProtKB-UniRule"/>
</dbReference>
<dbReference type="GO" id="GO:0006353">
    <property type="term" value="P:DNA-templated transcription termination"/>
    <property type="evidence" value="ECO:0007669"/>
    <property type="project" value="UniProtKB-UniRule"/>
</dbReference>
<dbReference type="CDD" id="cd06223">
    <property type="entry name" value="PRTases_typeI"/>
    <property type="match status" value="1"/>
</dbReference>
<dbReference type="FunFam" id="3.40.50.2020:FF:000020">
    <property type="entry name" value="Bifunctional protein PyrR"/>
    <property type="match status" value="1"/>
</dbReference>
<dbReference type="Gene3D" id="3.40.50.2020">
    <property type="match status" value="1"/>
</dbReference>
<dbReference type="HAMAP" id="MF_01219">
    <property type="entry name" value="PyrR"/>
    <property type="match status" value="1"/>
</dbReference>
<dbReference type="InterPro" id="IPR000836">
    <property type="entry name" value="PRibTrfase_dom"/>
</dbReference>
<dbReference type="InterPro" id="IPR029057">
    <property type="entry name" value="PRTase-like"/>
</dbReference>
<dbReference type="InterPro" id="IPR023050">
    <property type="entry name" value="PyrR"/>
</dbReference>
<dbReference type="InterPro" id="IPR050137">
    <property type="entry name" value="PyrR_bifunctional"/>
</dbReference>
<dbReference type="NCBIfam" id="NF003547">
    <property type="entry name" value="PRK05205.1-3"/>
    <property type="match status" value="1"/>
</dbReference>
<dbReference type="NCBIfam" id="NF003548">
    <property type="entry name" value="PRK05205.1-4"/>
    <property type="match status" value="1"/>
</dbReference>
<dbReference type="NCBIfam" id="NF003549">
    <property type="entry name" value="PRK05205.1-5"/>
    <property type="match status" value="1"/>
</dbReference>
<dbReference type="PANTHER" id="PTHR11608">
    <property type="entry name" value="BIFUNCTIONAL PROTEIN PYRR"/>
    <property type="match status" value="1"/>
</dbReference>
<dbReference type="PANTHER" id="PTHR11608:SF0">
    <property type="entry name" value="BIFUNCTIONAL PROTEIN PYRR"/>
    <property type="match status" value="1"/>
</dbReference>
<dbReference type="Pfam" id="PF00156">
    <property type="entry name" value="Pribosyltran"/>
    <property type="match status" value="1"/>
</dbReference>
<dbReference type="SUPFAM" id="SSF53271">
    <property type="entry name" value="PRTase-like"/>
    <property type="match status" value="1"/>
</dbReference>
<proteinExistence type="inferred from homology"/>
<feature type="chain" id="PRO_1000053828" description="Bifunctional protein PyrR">
    <location>
        <begin position="1"/>
        <end position="178"/>
    </location>
</feature>
<feature type="short sequence motif" description="PRPP-binding" evidence="1">
    <location>
        <begin position="99"/>
        <end position="111"/>
    </location>
</feature>
<organism>
    <name type="scientific">Clostridium novyi (strain NT)</name>
    <dbReference type="NCBI Taxonomy" id="386415"/>
    <lineage>
        <taxon>Bacteria</taxon>
        <taxon>Bacillati</taxon>
        <taxon>Bacillota</taxon>
        <taxon>Clostridia</taxon>
        <taxon>Eubacteriales</taxon>
        <taxon>Clostridiaceae</taxon>
        <taxon>Clostridium</taxon>
    </lineage>
</organism>
<reference key="1">
    <citation type="journal article" date="2006" name="Nat. Biotechnol.">
        <title>The genome and transcriptomes of the anti-tumor agent Clostridium novyi-NT.</title>
        <authorList>
            <person name="Bettegowda C."/>
            <person name="Huang X."/>
            <person name="Lin J."/>
            <person name="Cheong I."/>
            <person name="Kohli M."/>
            <person name="Szabo S.A."/>
            <person name="Zhang X."/>
            <person name="Diaz L.A. Jr."/>
            <person name="Velculescu V.E."/>
            <person name="Parmigiani G."/>
            <person name="Kinzler K.W."/>
            <person name="Vogelstein B."/>
            <person name="Zhou S."/>
        </authorList>
    </citation>
    <scope>NUCLEOTIDE SEQUENCE [LARGE SCALE GENOMIC DNA]</scope>
    <source>
        <strain>NT</strain>
    </source>
</reference>